<name>TXA1B_SCODE</name>
<feature type="signal peptide" evidence="2">
    <location>
        <begin position="1"/>
        <end position="23"/>
    </location>
</feature>
<feature type="chain" id="PRO_0000446753" description="Omega-scoloptoxin(10)-Ssd1b" evidence="4">
    <location>
        <begin position="24"/>
        <end position="101"/>
    </location>
</feature>
<evidence type="ECO:0000250" key="1">
    <source>
        <dbReference type="UniProtKB" id="P0DPZ2"/>
    </source>
</evidence>
<evidence type="ECO:0000269" key="2">
    <source>
    </source>
</evidence>
<evidence type="ECO:0000303" key="3">
    <source>
    </source>
</evidence>
<evidence type="ECO:0000305" key="4"/>
<evidence type="ECO:0000305" key="5">
    <source>
    </source>
</evidence>
<reference key="1">
    <citation type="journal article" date="2012" name="J. Proteome Res.">
        <title>Venomic and transcriptomic analysis of centipede Scolopendra subspinipes dehaani.</title>
        <authorList>
            <person name="Liu Z.C."/>
            <person name="Zhang R."/>
            <person name="Zhao F."/>
            <person name="Chen Z.M."/>
            <person name="Liu H.W."/>
            <person name="Wang Y.J."/>
            <person name="Jiang P."/>
            <person name="Zhang Y."/>
            <person name="Wu Y."/>
            <person name="Ding J.P."/>
            <person name="Lee W.H."/>
            <person name="Zhang Y."/>
        </authorList>
    </citation>
    <scope>NUCLEOTIDE SEQUENCE [MRNA]</scope>
    <scope>PROTEIN SEQUENCE OF 24-55</scope>
    <scope>SUBCELLULAR LOCATION</scope>
    <scope>MASS SPECTROMETRY</scope>
    <scope>FUNCTION</scope>
    <source>
        <tissue>Venom</tissue>
        <tissue>Venom gland</tissue>
    </source>
</reference>
<proteinExistence type="evidence at protein level"/>
<organism>
    <name type="scientific">Scolopendra dehaani</name>
    <name type="common">Thai centipede</name>
    <name type="synonym">Scolopendra subspinipes dehaani</name>
    <dbReference type="NCBI Taxonomy" id="2609776"/>
    <lineage>
        <taxon>Eukaryota</taxon>
        <taxon>Metazoa</taxon>
        <taxon>Ecdysozoa</taxon>
        <taxon>Arthropoda</taxon>
        <taxon>Myriapoda</taxon>
        <taxon>Chilopoda</taxon>
        <taxon>Pleurostigmophora</taxon>
        <taxon>Scolopendromorpha</taxon>
        <taxon>Scolopendridae</taxon>
        <taxon>Scolopendra</taxon>
    </lineage>
</organism>
<sequence length="101" mass="11441">MNKLTIIFFTILLLTYIIVEKEALKIEDLPEPESYKKAKQLAVKDANGDKRAEGIALDFLRQNRRNCTVNCDLVLTCPLLTPECCPKKNDDCLKLDTVKNG</sequence>
<comment type="function">
    <text evidence="5">Voltage-gated calcium channel inhibitor.</text>
</comment>
<comment type="subcellular location">
    <subcellularLocation>
        <location evidence="2">Secreted</location>
    </subcellularLocation>
</comment>
<comment type="tissue specificity">
    <text evidence="5">Expressed by the venom gland.</text>
</comment>
<comment type="PTM">
    <text evidence="4">Contains 3 disulfide bonds.</text>
</comment>
<comment type="mass spectrometry" mass="8726.6" method="MALDI" evidence="2"/>
<comment type="similarity">
    <text evidence="4">Belongs to the scoloptoxin-10 family.</text>
</comment>
<accession>P0DPV0</accession>
<dbReference type="EMBL" id="KC144448">
    <property type="status" value="NOT_ANNOTATED_CDS"/>
    <property type="molecule type" value="mRNA"/>
</dbReference>
<dbReference type="GO" id="GO:0005576">
    <property type="term" value="C:extracellular region"/>
    <property type="evidence" value="ECO:0007669"/>
    <property type="project" value="UniProtKB-SubCell"/>
</dbReference>
<dbReference type="GO" id="GO:0005246">
    <property type="term" value="F:calcium channel regulator activity"/>
    <property type="evidence" value="ECO:0007669"/>
    <property type="project" value="UniProtKB-KW"/>
</dbReference>
<dbReference type="GO" id="GO:0090729">
    <property type="term" value="F:toxin activity"/>
    <property type="evidence" value="ECO:0007669"/>
    <property type="project" value="UniProtKB-KW"/>
</dbReference>
<keyword id="KW-0108">Calcium channel impairing toxin</keyword>
<keyword id="KW-0903">Direct protein sequencing</keyword>
<keyword id="KW-1015">Disulfide bond</keyword>
<keyword id="KW-0872">Ion channel impairing toxin</keyword>
<keyword id="KW-0964">Secreted</keyword>
<keyword id="KW-0732">Signal</keyword>
<keyword id="KW-0800">Toxin</keyword>
<keyword id="KW-1218">Voltage-gated calcium channel impairing toxin</keyword>
<protein>
    <recommendedName>
        <fullName evidence="1">Omega-scoloptoxin(10)-Ssd1b</fullName>
        <shortName evidence="1">Omega-SLPTX(10)-Ssd1b</shortName>
    </recommendedName>
    <alternativeName>
        <fullName evidence="3">Toxin SSD449</fullName>
    </alternativeName>
</protein>